<evidence type="ECO:0000255" key="1">
    <source>
        <dbReference type="HAMAP-Rule" id="MF_01631"/>
    </source>
</evidence>
<gene>
    <name evidence="1" type="primary">glmU</name>
    <name type="ordered locus">STM3862</name>
</gene>
<accession>Q8ZKX0</accession>
<dbReference type="EC" id="2.7.7.23" evidence="1"/>
<dbReference type="EC" id="2.3.1.157" evidence="1"/>
<dbReference type="EMBL" id="AE006468">
    <property type="protein sequence ID" value="AAL22720.1"/>
    <property type="molecule type" value="Genomic_DNA"/>
</dbReference>
<dbReference type="RefSeq" id="NP_462761.1">
    <property type="nucleotide sequence ID" value="NC_003197.2"/>
</dbReference>
<dbReference type="RefSeq" id="WP_000934854.1">
    <property type="nucleotide sequence ID" value="NC_003197.2"/>
</dbReference>
<dbReference type="SMR" id="Q8ZKX0"/>
<dbReference type="STRING" id="99287.STM3862"/>
<dbReference type="PaxDb" id="99287-STM3862"/>
<dbReference type="GeneID" id="1255389"/>
<dbReference type="KEGG" id="stm:STM3862"/>
<dbReference type="PATRIC" id="fig|99287.12.peg.4091"/>
<dbReference type="HOGENOM" id="CLU_029499_15_2_6"/>
<dbReference type="OMA" id="TAIVEHK"/>
<dbReference type="PhylomeDB" id="Q8ZKX0"/>
<dbReference type="BioCyc" id="SENT99287:STM3862-MONOMER"/>
<dbReference type="UniPathway" id="UPA00113">
    <property type="reaction ID" value="UER00532"/>
</dbReference>
<dbReference type="UniPathway" id="UPA00113">
    <property type="reaction ID" value="UER00533"/>
</dbReference>
<dbReference type="UniPathway" id="UPA00973"/>
<dbReference type="Proteomes" id="UP000001014">
    <property type="component" value="Chromosome"/>
</dbReference>
<dbReference type="GO" id="GO:0005737">
    <property type="term" value="C:cytoplasm"/>
    <property type="evidence" value="ECO:0007669"/>
    <property type="project" value="UniProtKB-SubCell"/>
</dbReference>
<dbReference type="GO" id="GO:0016020">
    <property type="term" value="C:membrane"/>
    <property type="evidence" value="ECO:0007669"/>
    <property type="project" value="GOC"/>
</dbReference>
<dbReference type="GO" id="GO:0019134">
    <property type="term" value="F:glucosamine-1-phosphate N-acetyltransferase activity"/>
    <property type="evidence" value="ECO:0007669"/>
    <property type="project" value="UniProtKB-UniRule"/>
</dbReference>
<dbReference type="GO" id="GO:0000287">
    <property type="term" value="F:magnesium ion binding"/>
    <property type="evidence" value="ECO:0007669"/>
    <property type="project" value="UniProtKB-UniRule"/>
</dbReference>
<dbReference type="GO" id="GO:0003977">
    <property type="term" value="F:UDP-N-acetylglucosamine diphosphorylase activity"/>
    <property type="evidence" value="ECO:0007669"/>
    <property type="project" value="UniProtKB-UniRule"/>
</dbReference>
<dbReference type="GO" id="GO:0000902">
    <property type="term" value="P:cell morphogenesis"/>
    <property type="evidence" value="ECO:0007669"/>
    <property type="project" value="UniProtKB-UniRule"/>
</dbReference>
<dbReference type="GO" id="GO:0071555">
    <property type="term" value="P:cell wall organization"/>
    <property type="evidence" value="ECO:0007669"/>
    <property type="project" value="UniProtKB-KW"/>
</dbReference>
<dbReference type="GO" id="GO:0009245">
    <property type="term" value="P:lipid A biosynthetic process"/>
    <property type="evidence" value="ECO:0007669"/>
    <property type="project" value="UniProtKB-UniRule"/>
</dbReference>
<dbReference type="GO" id="GO:0009252">
    <property type="term" value="P:peptidoglycan biosynthetic process"/>
    <property type="evidence" value="ECO:0007669"/>
    <property type="project" value="UniProtKB-UniRule"/>
</dbReference>
<dbReference type="GO" id="GO:0008360">
    <property type="term" value="P:regulation of cell shape"/>
    <property type="evidence" value="ECO:0007669"/>
    <property type="project" value="UniProtKB-KW"/>
</dbReference>
<dbReference type="GO" id="GO:0006048">
    <property type="term" value="P:UDP-N-acetylglucosamine biosynthetic process"/>
    <property type="evidence" value="ECO:0007669"/>
    <property type="project" value="UniProtKB-UniPathway"/>
</dbReference>
<dbReference type="CDD" id="cd02540">
    <property type="entry name" value="GT2_GlmU_N_bac"/>
    <property type="match status" value="1"/>
</dbReference>
<dbReference type="CDD" id="cd03353">
    <property type="entry name" value="LbH_GlmU_C"/>
    <property type="match status" value="1"/>
</dbReference>
<dbReference type="FunFam" id="2.160.10.10:FF:000011">
    <property type="entry name" value="Bifunctional protein GlmU"/>
    <property type="match status" value="1"/>
</dbReference>
<dbReference type="FunFam" id="3.90.550.10:FF:000006">
    <property type="entry name" value="Bifunctional protein GlmU"/>
    <property type="match status" value="1"/>
</dbReference>
<dbReference type="Gene3D" id="2.160.10.10">
    <property type="entry name" value="Hexapeptide repeat proteins"/>
    <property type="match status" value="1"/>
</dbReference>
<dbReference type="Gene3D" id="3.90.550.10">
    <property type="entry name" value="Spore Coat Polysaccharide Biosynthesis Protein SpsA, Chain A"/>
    <property type="match status" value="1"/>
</dbReference>
<dbReference type="HAMAP" id="MF_01631">
    <property type="entry name" value="GlmU"/>
    <property type="match status" value="1"/>
</dbReference>
<dbReference type="InterPro" id="IPR005882">
    <property type="entry name" value="Bifunctional_GlmU"/>
</dbReference>
<dbReference type="InterPro" id="IPR050065">
    <property type="entry name" value="GlmU-like"/>
</dbReference>
<dbReference type="InterPro" id="IPR038009">
    <property type="entry name" value="GlmU_C_LbH"/>
</dbReference>
<dbReference type="InterPro" id="IPR001451">
    <property type="entry name" value="Hexapep"/>
</dbReference>
<dbReference type="InterPro" id="IPR018357">
    <property type="entry name" value="Hexapep_transf_CS"/>
</dbReference>
<dbReference type="InterPro" id="IPR025877">
    <property type="entry name" value="MobA-like_NTP_Trfase"/>
</dbReference>
<dbReference type="InterPro" id="IPR029044">
    <property type="entry name" value="Nucleotide-diphossugar_trans"/>
</dbReference>
<dbReference type="InterPro" id="IPR011004">
    <property type="entry name" value="Trimer_LpxA-like_sf"/>
</dbReference>
<dbReference type="NCBIfam" id="TIGR01173">
    <property type="entry name" value="glmU"/>
    <property type="match status" value="1"/>
</dbReference>
<dbReference type="NCBIfam" id="NF006986">
    <property type="entry name" value="PRK09451.1"/>
    <property type="match status" value="1"/>
</dbReference>
<dbReference type="PANTHER" id="PTHR43584:SF3">
    <property type="entry name" value="BIFUNCTIONAL PROTEIN GLMU"/>
    <property type="match status" value="1"/>
</dbReference>
<dbReference type="PANTHER" id="PTHR43584">
    <property type="entry name" value="NUCLEOTIDYL TRANSFERASE"/>
    <property type="match status" value="1"/>
</dbReference>
<dbReference type="Pfam" id="PF00132">
    <property type="entry name" value="Hexapep"/>
    <property type="match status" value="1"/>
</dbReference>
<dbReference type="Pfam" id="PF12804">
    <property type="entry name" value="NTP_transf_3"/>
    <property type="match status" value="1"/>
</dbReference>
<dbReference type="SUPFAM" id="SSF53448">
    <property type="entry name" value="Nucleotide-diphospho-sugar transferases"/>
    <property type="match status" value="1"/>
</dbReference>
<dbReference type="SUPFAM" id="SSF51161">
    <property type="entry name" value="Trimeric LpxA-like enzymes"/>
    <property type="match status" value="1"/>
</dbReference>
<dbReference type="PROSITE" id="PS00101">
    <property type="entry name" value="HEXAPEP_TRANSFERASES"/>
    <property type="match status" value="1"/>
</dbReference>
<sequence>MLNSAMSVVILAAGKGTRMYSDIPKVLHTLAGKPMVQHVIDAATKLGAAQVHLVYGHGGELLKQTLKDDKLNWVLQAEQLGTGHAMQQAAPFFSDDEDILMLYGDVPLISVETLQRLRDAKPQGGIGLLTVKLDDPSGYGRITRENGKVTGIVEHKDATDEQRQIQEINTGILIANGADMKRWLSKLTNNNAQGEYYITDIIALAYQEGREIAAVHPARISETDGVNNRLQLSRLERIYQAEQAEKLLLSGVMLRDPARFDLRGTLHCGMDVEIDANVIIEGYVTLGHRVKIGAGCIIKNSVIGDDCEISPYSVVEDAHLEAACTIGPFARLRPGAELLAGAHVGNFVEMKKARLGKGSKAGHLTYLGDAEIGDNVNIGAGTITCNYDGANKFKTVIGDDVFVGSDTQLVAPVTVGKGATIAAGTTVTRNVADNELVLSRVPQVHKQGWQRPVKKK</sequence>
<protein>
    <recommendedName>
        <fullName evidence="1">Bifunctional protein GlmU</fullName>
    </recommendedName>
    <domain>
        <recommendedName>
            <fullName evidence="1">UDP-N-acetylglucosamine pyrophosphorylase</fullName>
            <ecNumber evidence="1">2.7.7.23</ecNumber>
        </recommendedName>
        <alternativeName>
            <fullName evidence="1">N-acetylglucosamine-1-phosphate uridyltransferase</fullName>
        </alternativeName>
    </domain>
    <domain>
        <recommendedName>
            <fullName evidence="1">Glucosamine-1-phosphate N-acetyltransferase</fullName>
            <ecNumber evidence="1">2.3.1.157</ecNumber>
        </recommendedName>
    </domain>
</protein>
<reference key="1">
    <citation type="journal article" date="2001" name="Nature">
        <title>Complete genome sequence of Salmonella enterica serovar Typhimurium LT2.</title>
        <authorList>
            <person name="McClelland M."/>
            <person name="Sanderson K.E."/>
            <person name="Spieth J."/>
            <person name="Clifton S.W."/>
            <person name="Latreille P."/>
            <person name="Courtney L."/>
            <person name="Porwollik S."/>
            <person name="Ali J."/>
            <person name="Dante M."/>
            <person name="Du F."/>
            <person name="Hou S."/>
            <person name="Layman D."/>
            <person name="Leonard S."/>
            <person name="Nguyen C."/>
            <person name="Scott K."/>
            <person name="Holmes A."/>
            <person name="Grewal N."/>
            <person name="Mulvaney E."/>
            <person name="Ryan E."/>
            <person name="Sun H."/>
            <person name="Florea L."/>
            <person name="Miller W."/>
            <person name="Stoneking T."/>
            <person name="Nhan M."/>
            <person name="Waterston R."/>
            <person name="Wilson R.K."/>
        </authorList>
    </citation>
    <scope>NUCLEOTIDE SEQUENCE [LARGE SCALE GENOMIC DNA]</scope>
    <source>
        <strain>LT2 / SGSC1412 / ATCC 700720</strain>
    </source>
</reference>
<comment type="function">
    <text evidence="1">Catalyzes the last two sequential reactions in the de novo biosynthetic pathway for UDP-N-acetylglucosamine (UDP-GlcNAc). The C-terminal domain catalyzes the transfer of acetyl group from acetyl coenzyme A to glucosamine-1-phosphate (GlcN-1-P) to produce N-acetylglucosamine-1-phosphate (GlcNAc-1-P), which is converted into UDP-GlcNAc by the transfer of uridine 5-monophosphate (from uridine 5-triphosphate), a reaction catalyzed by the N-terminal domain.</text>
</comment>
<comment type="catalytic activity">
    <reaction evidence="1">
        <text>alpha-D-glucosamine 1-phosphate + acetyl-CoA = N-acetyl-alpha-D-glucosamine 1-phosphate + CoA + H(+)</text>
        <dbReference type="Rhea" id="RHEA:13725"/>
        <dbReference type="ChEBI" id="CHEBI:15378"/>
        <dbReference type="ChEBI" id="CHEBI:57287"/>
        <dbReference type="ChEBI" id="CHEBI:57288"/>
        <dbReference type="ChEBI" id="CHEBI:57776"/>
        <dbReference type="ChEBI" id="CHEBI:58516"/>
        <dbReference type="EC" id="2.3.1.157"/>
    </reaction>
</comment>
<comment type="catalytic activity">
    <reaction evidence="1">
        <text>N-acetyl-alpha-D-glucosamine 1-phosphate + UTP + H(+) = UDP-N-acetyl-alpha-D-glucosamine + diphosphate</text>
        <dbReference type="Rhea" id="RHEA:13509"/>
        <dbReference type="ChEBI" id="CHEBI:15378"/>
        <dbReference type="ChEBI" id="CHEBI:33019"/>
        <dbReference type="ChEBI" id="CHEBI:46398"/>
        <dbReference type="ChEBI" id="CHEBI:57705"/>
        <dbReference type="ChEBI" id="CHEBI:57776"/>
        <dbReference type="EC" id="2.7.7.23"/>
    </reaction>
</comment>
<comment type="cofactor">
    <cofactor evidence="1">
        <name>Mg(2+)</name>
        <dbReference type="ChEBI" id="CHEBI:18420"/>
    </cofactor>
    <text evidence="1">Binds 1 Mg(2+) ion per subunit.</text>
</comment>
<comment type="pathway">
    <text evidence="1">Nucleotide-sugar biosynthesis; UDP-N-acetyl-alpha-D-glucosamine biosynthesis; N-acetyl-alpha-D-glucosamine 1-phosphate from alpha-D-glucosamine 6-phosphate (route II): step 2/2.</text>
</comment>
<comment type="pathway">
    <text evidence="1">Nucleotide-sugar biosynthesis; UDP-N-acetyl-alpha-D-glucosamine biosynthesis; UDP-N-acetyl-alpha-D-glucosamine from N-acetyl-alpha-D-glucosamine 1-phosphate: step 1/1.</text>
</comment>
<comment type="pathway">
    <text evidence="1">Bacterial outer membrane biogenesis; LPS lipid A biosynthesis.</text>
</comment>
<comment type="subunit">
    <text evidence="1">Homotrimer.</text>
</comment>
<comment type="subcellular location">
    <subcellularLocation>
        <location evidence="1">Cytoplasm</location>
    </subcellularLocation>
</comment>
<comment type="similarity">
    <text evidence="1">In the N-terminal section; belongs to the N-acetylglucosamine-1-phosphate uridyltransferase family.</text>
</comment>
<comment type="similarity">
    <text evidence="1">In the C-terminal section; belongs to the transferase hexapeptide repeat family.</text>
</comment>
<feature type="chain" id="PRO_0000233838" description="Bifunctional protein GlmU">
    <location>
        <begin position="1"/>
        <end position="456"/>
    </location>
</feature>
<feature type="region of interest" description="Pyrophosphorylase" evidence="1">
    <location>
        <begin position="1"/>
        <end position="229"/>
    </location>
</feature>
<feature type="region of interest" description="Linker" evidence="1">
    <location>
        <begin position="230"/>
        <end position="250"/>
    </location>
</feature>
<feature type="region of interest" description="N-acetyltransferase" evidence="1">
    <location>
        <begin position="251"/>
        <end position="456"/>
    </location>
</feature>
<feature type="active site" description="Proton acceptor" evidence="1">
    <location>
        <position position="363"/>
    </location>
</feature>
<feature type="binding site" evidence="1">
    <location>
        <begin position="11"/>
        <end position="14"/>
    </location>
    <ligand>
        <name>UDP-N-acetyl-alpha-D-glucosamine</name>
        <dbReference type="ChEBI" id="CHEBI:57705"/>
    </ligand>
</feature>
<feature type="binding site" evidence="1">
    <location>
        <position position="25"/>
    </location>
    <ligand>
        <name>UDP-N-acetyl-alpha-D-glucosamine</name>
        <dbReference type="ChEBI" id="CHEBI:57705"/>
    </ligand>
</feature>
<feature type="binding site" evidence="1">
    <location>
        <position position="76"/>
    </location>
    <ligand>
        <name>UDP-N-acetyl-alpha-D-glucosamine</name>
        <dbReference type="ChEBI" id="CHEBI:57705"/>
    </ligand>
</feature>
<feature type="binding site" evidence="1">
    <location>
        <begin position="81"/>
        <end position="82"/>
    </location>
    <ligand>
        <name>UDP-N-acetyl-alpha-D-glucosamine</name>
        <dbReference type="ChEBI" id="CHEBI:57705"/>
    </ligand>
</feature>
<feature type="binding site" evidence="1">
    <location>
        <begin position="103"/>
        <end position="105"/>
    </location>
    <ligand>
        <name>UDP-N-acetyl-alpha-D-glucosamine</name>
        <dbReference type="ChEBI" id="CHEBI:57705"/>
    </ligand>
</feature>
<feature type="binding site" evidence="1">
    <location>
        <position position="105"/>
    </location>
    <ligand>
        <name>Mg(2+)</name>
        <dbReference type="ChEBI" id="CHEBI:18420"/>
    </ligand>
</feature>
<feature type="binding site" evidence="1">
    <location>
        <position position="140"/>
    </location>
    <ligand>
        <name>UDP-N-acetyl-alpha-D-glucosamine</name>
        <dbReference type="ChEBI" id="CHEBI:57705"/>
    </ligand>
</feature>
<feature type="binding site" evidence="1">
    <location>
        <position position="154"/>
    </location>
    <ligand>
        <name>UDP-N-acetyl-alpha-D-glucosamine</name>
        <dbReference type="ChEBI" id="CHEBI:57705"/>
    </ligand>
</feature>
<feature type="binding site" evidence="1">
    <location>
        <position position="169"/>
    </location>
    <ligand>
        <name>UDP-N-acetyl-alpha-D-glucosamine</name>
        <dbReference type="ChEBI" id="CHEBI:57705"/>
    </ligand>
</feature>
<feature type="binding site" evidence="1">
    <location>
        <position position="227"/>
    </location>
    <ligand>
        <name>Mg(2+)</name>
        <dbReference type="ChEBI" id="CHEBI:18420"/>
    </ligand>
</feature>
<feature type="binding site" evidence="1">
    <location>
        <position position="227"/>
    </location>
    <ligand>
        <name>UDP-N-acetyl-alpha-D-glucosamine</name>
        <dbReference type="ChEBI" id="CHEBI:57705"/>
    </ligand>
</feature>
<feature type="binding site" evidence="1">
    <location>
        <position position="333"/>
    </location>
    <ligand>
        <name>UDP-N-acetyl-alpha-D-glucosamine</name>
        <dbReference type="ChEBI" id="CHEBI:57705"/>
    </ligand>
</feature>
<feature type="binding site" evidence="1">
    <location>
        <position position="351"/>
    </location>
    <ligand>
        <name>UDP-N-acetyl-alpha-D-glucosamine</name>
        <dbReference type="ChEBI" id="CHEBI:57705"/>
    </ligand>
</feature>
<feature type="binding site" evidence="1">
    <location>
        <position position="366"/>
    </location>
    <ligand>
        <name>UDP-N-acetyl-alpha-D-glucosamine</name>
        <dbReference type="ChEBI" id="CHEBI:57705"/>
    </ligand>
</feature>
<feature type="binding site" evidence="1">
    <location>
        <position position="377"/>
    </location>
    <ligand>
        <name>UDP-N-acetyl-alpha-D-glucosamine</name>
        <dbReference type="ChEBI" id="CHEBI:57705"/>
    </ligand>
</feature>
<feature type="binding site" evidence="1">
    <location>
        <position position="380"/>
    </location>
    <ligand>
        <name>acetyl-CoA</name>
        <dbReference type="ChEBI" id="CHEBI:57288"/>
    </ligand>
</feature>
<feature type="binding site" evidence="1">
    <location>
        <begin position="386"/>
        <end position="387"/>
    </location>
    <ligand>
        <name>acetyl-CoA</name>
        <dbReference type="ChEBI" id="CHEBI:57288"/>
    </ligand>
</feature>
<feature type="binding site" evidence="1">
    <location>
        <position position="405"/>
    </location>
    <ligand>
        <name>acetyl-CoA</name>
        <dbReference type="ChEBI" id="CHEBI:57288"/>
    </ligand>
</feature>
<feature type="binding site" evidence="1">
    <location>
        <position position="423"/>
    </location>
    <ligand>
        <name>acetyl-CoA</name>
        <dbReference type="ChEBI" id="CHEBI:57288"/>
    </ligand>
</feature>
<feature type="binding site" evidence="1">
    <location>
        <position position="440"/>
    </location>
    <ligand>
        <name>acetyl-CoA</name>
        <dbReference type="ChEBI" id="CHEBI:57288"/>
    </ligand>
</feature>
<name>GLMU_SALTY</name>
<proteinExistence type="inferred from homology"/>
<keyword id="KW-0012">Acyltransferase</keyword>
<keyword id="KW-0133">Cell shape</keyword>
<keyword id="KW-0961">Cell wall biogenesis/degradation</keyword>
<keyword id="KW-0963">Cytoplasm</keyword>
<keyword id="KW-0460">Magnesium</keyword>
<keyword id="KW-0479">Metal-binding</keyword>
<keyword id="KW-0511">Multifunctional enzyme</keyword>
<keyword id="KW-0548">Nucleotidyltransferase</keyword>
<keyword id="KW-0573">Peptidoglycan synthesis</keyword>
<keyword id="KW-1185">Reference proteome</keyword>
<keyword id="KW-0677">Repeat</keyword>
<keyword id="KW-0808">Transferase</keyword>
<organism>
    <name type="scientific">Salmonella typhimurium (strain LT2 / SGSC1412 / ATCC 700720)</name>
    <dbReference type="NCBI Taxonomy" id="99287"/>
    <lineage>
        <taxon>Bacteria</taxon>
        <taxon>Pseudomonadati</taxon>
        <taxon>Pseudomonadota</taxon>
        <taxon>Gammaproteobacteria</taxon>
        <taxon>Enterobacterales</taxon>
        <taxon>Enterobacteriaceae</taxon>
        <taxon>Salmonella</taxon>
    </lineage>
</organism>